<reference key="1">
    <citation type="journal article" date="2009" name="Appl. Environ. Microbiol.">
        <title>Genome analysis of the meat starter culture bacterium Staphylococcus carnosus TM300.</title>
        <authorList>
            <person name="Rosenstein R."/>
            <person name="Nerz C."/>
            <person name="Biswas L."/>
            <person name="Resch A."/>
            <person name="Raddatz G."/>
            <person name="Schuster S.C."/>
            <person name="Goetz F."/>
        </authorList>
    </citation>
    <scope>NUCLEOTIDE SEQUENCE [LARGE SCALE GENOMIC DNA]</scope>
    <source>
        <strain>TM300</strain>
    </source>
</reference>
<keyword id="KW-0963">Cytoplasm</keyword>
<keyword id="KW-0444">Lipid biosynthesis</keyword>
<keyword id="KW-0443">Lipid metabolism</keyword>
<keyword id="KW-0520">NAD</keyword>
<keyword id="KW-0521">NADP</keyword>
<keyword id="KW-0547">Nucleotide-binding</keyword>
<keyword id="KW-0560">Oxidoreductase</keyword>
<keyword id="KW-0594">Phospholipid biosynthesis</keyword>
<keyword id="KW-1208">Phospholipid metabolism</keyword>
<keyword id="KW-1185">Reference proteome</keyword>
<sequence>MSKVAVFGMGSFGTALANVLAQNGHDVLMWGKNKQSIDEVNQYHSNSRYLNGAQLDKSITATSNLNEAINFSDTYLIALPTKAIREVIKNIDSQLDSKKVFIHVAKGIENATFKRVSEMIEDSLSPEHNGGIGVLSGPSHAEEVVIQQPTTVAASSPDPKVSKLIQDLFMNDYLRVYTNDDLVGVELGGALKNIIAVASGIVAGMGFGDNAKAALMTRGLAEISRLGEELGADPMTFLGLGGIGDLIVTCTSTHSRNYTLGYKIGQGKTVDEALSEMNMVAEGFYTTESVYHLAKQRNIDMPITSALYGVLFKQVPLDESLKLLMGRDKKSE</sequence>
<feature type="chain" id="PRO_1000190171" description="Glycerol-3-phosphate dehydrogenase [NAD(P)+]">
    <location>
        <begin position="1"/>
        <end position="332"/>
    </location>
</feature>
<feature type="active site" description="Proton acceptor" evidence="1">
    <location>
        <position position="192"/>
    </location>
</feature>
<feature type="binding site" evidence="1">
    <location>
        <position position="11"/>
    </location>
    <ligand>
        <name>NADPH</name>
        <dbReference type="ChEBI" id="CHEBI:57783"/>
    </ligand>
</feature>
<feature type="binding site" evidence="1">
    <location>
        <position position="12"/>
    </location>
    <ligand>
        <name>NADPH</name>
        <dbReference type="ChEBI" id="CHEBI:57783"/>
    </ligand>
</feature>
<feature type="binding site" evidence="1">
    <location>
        <position position="32"/>
    </location>
    <ligand>
        <name>NADPH</name>
        <dbReference type="ChEBI" id="CHEBI:57783"/>
    </ligand>
</feature>
<feature type="binding site" evidence="1">
    <location>
        <position position="106"/>
    </location>
    <ligand>
        <name>NADPH</name>
        <dbReference type="ChEBI" id="CHEBI:57783"/>
    </ligand>
</feature>
<feature type="binding site" evidence="1">
    <location>
        <position position="106"/>
    </location>
    <ligand>
        <name>sn-glycerol 3-phosphate</name>
        <dbReference type="ChEBI" id="CHEBI:57597"/>
    </ligand>
</feature>
<feature type="binding site" evidence="1">
    <location>
        <position position="137"/>
    </location>
    <ligand>
        <name>sn-glycerol 3-phosphate</name>
        <dbReference type="ChEBI" id="CHEBI:57597"/>
    </ligand>
</feature>
<feature type="binding site" evidence="1">
    <location>
        <position position="139"/>
    </location>
    <ligand>
        <name>sn-glycerol 3-phosphate</name>
        <dbReference type="ChEBI" id="CHEBI:57597"/>
    </ligand>
</feature>
<feature type="binding site" evidence="1">
    <location>
        <position position="141"/>
    </location>
    <ligand>
        <name>NADPH</name>
        <dbReference type="ChEBI" id="CHEBI:57783"/>
    </ligand>
</feature>
<feature type="binding site" evidence="1">
    <location>
        <position position="192"/>
    </location>
    <ligand>
        <name>sn-glycerol 3-phosphate</name>
        <dbReference type="ChEBI" id="CHEBI:57597"/>
    </ligand>
</feature>
<feature type="binding site" evidence="1">
    <location>
        <position position="245"/>
    </location>
    <ligand>
        <name>sn-glycerol 3-phosphate</name>
        <dbReference type="ChEBI" id="CHEBI:57597"/>
    </ligand>
</feature>
<feature type="binding site" evidence="1">
    <location>
        <position position="255"/>
    </location>
    <ligand>
        <name>sn-glycerol 3-phosphate</name>
        <dbReference type="ChEBI" id="CHEBI:57597"/>
    </ligand>
</feature>
<feature type="binding site" evidence="1">
    <location>
        <position position="256"/>
    </location>
    <ligand>
        <name>NADPH</name>
        <dbReference type="ChEBI" id="CHEBI:57783"/>
    </ligand>
</feature>
<feature type="binding site" evidence="1">
    <location>
        <position position="256"/>
    </location>
    <ligand>
        <name>sn-glycerol 3-phosphate</name>
        <dbReference type="ChEBI" id="CHEBI:57597"/>
    </ligand>
</feature>
<feature type="binding site" evidence="1">
    <location>
        <position position="257"/>
    </location>
    <ligand>
        <name>sn-glycerol 3-phosphate</name>
        <dbReference type="ChEBI" id="CHEBI:57597"/>
    </ligand>
</feature>
<feature type="binding site" evidence="1">
    <location>
        <position position="280"/>
    </location>
    <ligand>
        <name>NADPH</name>
        <dbReference type="ChEBI" id="CHEBI:57783"/>
    </ligand>
</feature>
<feature type="binding site" evidence="1">
    <location>
        <position position="282"/>
    </location>
    <ligand>
        <name>NADPH</name>
        <dbReference type="ChEBI" id="CHEBI:57783"/>
    </ligand>
</feature>
<protein>
    <recommendedName>
        <fullName evidence="1">Glycerol-3-phosphate dehydrogenase [NAD(P)+]</fullName>
        <ecNumber evidence="1">1.1.1.94</ecNumber>
    </recommendedName>
    <alternativeName>
        <fullName evidence="1">NAD(P)(+)-dependent glycerol-3-phosphate dehydrogenase</fullName>
    </alternativeName>
    <alternativeName>
        <fullName evidence="1">NAD(P)H-dependent dihydroxyacetone-phosphate reductase</fullName>
    </alternativeName>
</protein>
<accession>B9DNV8</accession>
<gene>
    <name evidence="1" type="primary">gpsA</name>
    <name type="ordered locus">Sca_1106</name>
</gene>
<proteinExistence type="inferred from homology"/>
<organism>
    <name type="scientific">Staphylococcus carnosus (strain TM300)</name>
    <dbReference type="NCBI Taxonomy" id="396513"/>
    <lineage>
        <taxon>Bacteria</taxon>
        <taxon>Bacillati</taxon>
        <taxon>Bacillota</taxon>
        <taxon>Bacilli</taxon>
        <taxon>Bacillales</taxon>
        <taxon>Staphylococcaceae</taxon>
        <taxon>Staphylococcus</taxon>
    </lineage>
</organism>
<evidence type="ECO:0000255" key="1">
    <source>
        <dbReference type="HAMAP-Rule" id="MF_00394"/>
    </source>
</evidence>
<comment type="function">
    <text evidence="1">Catalyzes the reduction of the glycolytic intermediate dihydroxyacetone phosphate (DHAP) to sn-glycerol 3-phosphate (G3P), the key precursor for phospholipid synthesis.</text>
</comment>
<comment type="catalytic activity">
    <reaction evidence="1">
        <text>sn-glycerol 3-phosphate + NAD(+) = dihydroxyacetone phosphate + NADH + H(+)</text>
        <dbReference type="Rhea" id="RHEA:11092"/>
        <dbReference type="ChEBI" id="CHEBI:15378"/>
        <dbReference type="ChEBI" id="CHEBI:57540"/>
        <dbReference type="ChEBI" id="CHEBI:57597"/>
        <dbReference type="ChEBI" id="CHEBI:57642"/>
        <dbReference type="ChEBI" id="CHEBI:57945"/>
        <dbReference type="EC" id="1.1.1.94"/>
    </reaction>
    <physiologicalReaction direction="right-to-left" evidence="1">
        <dbReference type="Rhea" id="RHEA:11094"/>
    </physiologicalReaction>
</comment>
<comment type="catalytic activity">
    <reaction evidence="1">
        <text>sn-glycerol 3-phosphate + NADP(+) = dihydroxyacetone phosphate + NADPH + H(+)</text>
        <dbReference type="Rhea" id="RHEA:11096"/>
        <dbReference type="ChEBI" id="CHEBI:15378"/>
        <dbReference type="ChEBI" id="CHEBI:57597"/>
        <dbReference type="ChEBI" id="CHEBI:57642"/>
        <dbReference type="ChEBI" id="CHEBI:57783"/>
        <dbReference type="ChEBI" id="CHEBI:58349"/>
        <dbReference type="EC" id="1.1.1.94"/>
    </reaction>
    <physiologicalReaction direction="right-to-left" evidence="1">
        <dbReference type="Rhea" id="RHEA:11098"/>
    </physiologicalReaction>
</comment>
<comment type="pathway">
    <text evidence="1">Membrane lipid metabolism; glycerophospholipid metabolism.</text>
</comment>
<comment type="subcellular location">
    <subcellularLocation>
        <location evidence="1">Cytoplasm</location>
    </subcellularLocation>
</comment>
<comment type="similarity">
    <text evidence="1">Belongs to the NAD-dependent glycerol-3-phosphate dehydrogenase family.</text>
</comment>
<name>GPDA_STACT</name>
<dbReference type="EC" id="1.1.1.94" evidence="1"/>
<dbReference type="EMBL" id="AM295250">
    <property type="protein sequence ID" value="CAL28014.1"/>
    <property type="molecule type" value="Genomic_DNA"/>
</dbReference>
<dbReference type="RefSeq" id="WP_015900355.1">
    <property type="nucleotide sequence ID" value="NC_012121.1"/>
</dbReference>
<dbReference type="SMR" id="B9DNV8"/>
<dbReference type="GeneID" id="93793532"/>
<dbReference type="KEGG" id="sca:SCA_1106"/>
<dbReference type="eggNOG" id="COG0240">
    <property type="taxonomic scope" value="Bacteria"/>
</dbReference>
<dbReference type="HOGENOM" id="CLU_033449_0_2_9"/>
<dbReference type="OrthoDB" id="9812273at2"/>
<dbReference type="BioCyc" id="SCAR396513:SCA_RS05540-MONOMER"/>
<dbReference type="UniPathway" id="UPA00940"/>
<dbReference type="Proteomes" id="UP000000444">
    <property type="component" value="Chromosome"/>
</dbReference>
<dbReference type="GO" id="GO:0005829">
    <property type="term" value="C:cytosol"/>
    <property type="evidence" value="ECO:0007669"/>
    <property type="project" value="TreeGrafter"/>
</dbReference>
<dbReference type="GO" id="GO:0047952">
    <property type="term" value="F:glycerol-3-phosphate dehydrogenase [NAD(P)+] activity"/>
    <property type="evidence" value="ECO:0007669"/>
    <property type="project" value="UniProtKB-UniRule"/>
</dbReference>
<dbReference type="GO" id="GO:0051287">
    <property type="term" value="F:NAD binding"/>
    <property type="evidence" value="ECO:0007669"/>
    <property type="project" value="InterPro"/>
</dbReference>
<dbReference type="GO" id="GO:0005975">
    <property type="term" value="P:carbohydrate metabolic process"/>
    <property type="evidence" value="ECO:0007669"/>
    <property type="project" value="InterPro"/>
</dbReference>
<dbReference type="GO" id="GO:0046167">
    <property type="term" value="P:glycerol-3-phosphate biosynthetic process"/>
    <property type="evidence" value="ECO:0007669"/>
    <property type="project" value="UniProtKB-UniRule"/>
</dbReference>
<dbReference type="GO" id="GO:0046168">
    <property type="term" value="P:glycerol-3-phosphate catabolic process"/>
    <property type="evidence" value="ECO:0007669"/>
    <property type="project" value="InterPro"/>
</dbReference>
<dbReference type="GO" id="GO:0006650">
    <property type="term" value="P:glycerophospholipid metabolic process"/>
    <property type="evidence" value="ECO:0007669"/>
    <property type="project" value="UniProtKB-UniRule"/>
</dbReference>
<dbReference type="GO" id="GO:0008654">
    <property type="term" value="P:phospholipid biosynthetic process"/>
    <property type="evidence" value="ECO:0007669"/>
    <property type="project" value="UniProtKB-KW"/>
</dbReference>
<dbReference type="FunFam" id="1.10.1040.10:FF:000001">
    <property type="entry name" value="Glycerol-3-phosphate dehydrogenase [NAD(P)+]"/>
    <property type="match status" value="1"/>
</dbReference>
<dbReference type="FunFam" id="3.40.50.720:FF:000019">
    <property type="entry name" value="Glycerol-3-phosphate dehydrogenase [NAD(P)+]"/>
    <property type="match status" value="1"/>
</dbReference>
<dbReference type="Gene3D" id="1.10.1040.10">
    <property type="entry name" value="N-(1-d-carboxylethyl)-l-norvaline Dehydrogenase, domain 2"/>
    <property type="match status" value="1"/>
</dbReference>
<dbReference type="Gene3D" id="3.40.50.720">
    <property type="entry name" value="NAD(P)-binding Rossmann-like Domain"/>
    <property type="match status" value="1"/>
</dbReference>
<dbReference type="HAMAP" id="MF_00394">
    <property type="entry name" value="NAD_Glyc3P_dehydrog"/>
    <property type="match status" value="1"/>
</dbReference>
<dbReference type="InterPro" id="IPR008927">
    <property type="entry name" value="6-PGluconate_DH-like_C_sf"/>
</dbReference>
<dbReference type="InterPro" id="IPR013328">
    <property type="entry name" value="6PGD_dom2"/>
</dbReference>
<dbReference type="InterPro" id="IPR006168">
    <property type="entry name" value="G3P_DH_NAD-dep"/>
</dbReference>
<dbReference type="InterPro" id="IPR006109">
    <property type="entry name" value="G3P_DH_NAD-dep_C"/>
</dbReference>
<dbReference type="InterPro" id="IPR011128">
    <property type="entry name" value="G3P_DH_NAD-dep_N"/>
</dbReference>
<dbReference type="InterPro" id="IPR036291">
    <property type="entry name" value="NAD(P)-bd_dom_sf"/>
</dbReference>
<dbReference type="NCBIfam" id="NF000940">
    <property type="entry name" value="PRK00094.1-2"/>
    <property type="match status" value="1"/>
</dbReference>
<dbReference type="NCBIfam" id="NF000941">
    <property type="entry name" value="PRK00094.1-3"/>
    <property type="match status" value="1"/>
</dbReference>
<dbReference type="NCBIfam" id="NF000942">
    <property type="entry name" value="PRK00094.1-4"/>
    <property type="match status" value="1"/>
</dbReference>
<dbReference type="PANTHER" id="PTHR11728">
    <property type="entry name" value="GLYCEROL-3-PHOSPHATE DEHYDROGENASE"/>
    <property type="match status" value="1"/>
</dbReference>
<dbReference type="PANTHER" id="PTHR11728:SF1">
    <property type="entry name" value="GLYCEROL-3-PHOSPHATE DEHYDROGENASE [NAD(+)] 2, CHLOROPLASTIC"/>
    <property type="match status" value="1"/>
</dbReference>
<dbReference type="Pfam" id="PF07479">
    <property type="entry name" value="NAD_Gly3P_dh_C"/>
    <property type="match status" value="1"/>
</dbReference>
<dbReference type="Pfam" id="PF01210">
    <property type="entry name" value="NAD_Gly3P_dh_N"/>
    <property type="match status" value="1"/>
</dbReference>
<dbReference type="PIRSF" id="PIRSF000114">
    <property type="entry name" value="Glycerol-3-P_dh"/>
    <property type="match status" value="1"/>
</dbReference>
<dbReference type="PRINTS" id="PR00077">
    <property type="entry name" value="GPDHDRGNASE"/>
</dbReference>
<dbReference type="SUPFAM" id="SSF48179">
    <property type="entry name" value="6-phosphogluconate dehydrogenase C-terminal domain-like"/>
    <property type="match status" value="1"/>
</dbReference>
<dbReference type="SUPFAM" id="SSF51735">
    <property type="entry name" value="NAD(P)-binding Rossmann-fold domains"/>
    <property type="match status" value="1"/>
</dbReference>
<dbReference type="PROSITE" id="PS00957">
    <property type="entry name" value="NAD_G3PDH"/>
    <property type="match status" value="1"/>
</dbReference>